<organism>
    <name type="scientific">Schizosaccharomyces pombe (strain 972 / ATCC 24843)</name>
    <name type="common">Fission yeast</name>
    <dbReference type="NCBI Taxonomy" id="284812"/>
    <lineage>
        <taxon>Eukaryota</taxon>
        <taxon>Fungi</taxon>
        <taxon>Dikarya</taxon>
        <taxon>Ascomycota</taxon>
        <taxon>Taphrinomycotina</taxon>
        <taxon>Schizosaccharomycetes</taxon>
        <taxon>Schizosaccharomycetales</taxon>
        <taxon>Schizosaccharomycetaceae</taxon>
        <taxon>Schizosaccharomyces</taxon>
    </lineage>
</organism>
<protein>
    <recommendedName>
        <fullName>Non-structural maintenance of chromosome element 6</fullName>
        <shortName>Non-SMC element 6</shortName>
    </recommendedName>
    <alternativeName>
        <fullName>Core protein 1</fullName>
    </alternativeName>
</protein>
<gene>
    <name type="primary">nse6</name>
    <name type="synonym">cor1</name>
    <name type="ORF">SPAC11E3.08c</name>
</gene>
<evidence type="ECO:0000256" key="1">
    <source>
        <dbReference type="SAM" id="MobiDB-lite"/>
    </source>
</evidence>
<evidence type="ECO:0000269" key="2">
    <source>
    </source>
</evidence>
<evidence type="ECO:0000269" key="3">
    <source>
    </source>
</evidence>
<sequence length="522" mass="59899">MNASNNISKFPDLDNSSKLIDHILDSDDSEELDELPDISSLVPSARAQSRKQYLKNDSSNSSTYRWNIDLLSSTATIDDSVAKRRKLAVQNLLQYDSTQTFQTGDEIDELIGKSVGSNVLNVLRSNPIYDDDLRYEYCSNSKARVPDWNTLKAECLKDNDLEFNEGIIPTTFGDLLSAKLVPLDIALSICSLQFFRSLGDTTCSEWIANLEKIFYSYKSSSNNLNQIVRFIFETTADMIGIDLAKRQVPIQLERTSASENLKSNLKIKVINFLKCCGTLYRFSDDTVRFEMIQDACRILIDNQVGSFCKWQFSQFMELPISLNPDFLISNIHKVSESPRVWVTILSSLSRSCQKFRKKIAFTLFVGKQSKNDDSDFSSLCQRLDEISASCNNDYTTLLYQIRTFGYAVDEKHFKTNERLECLLEKLRKIDLTISGSTDHLLLSRCEVKDCIHRLFMVLYYLNTNSAPELERIIESDLPNNNKQKDRYFKDKTSNLSMKENKSFSAKKVKKGKKKNKRQAYKR</sequence>
<dbReference type="EMBL" id="AJ002494">
    <property type="protein sequence ID" value="CAA05501.1"/>
    <property type="molecule type" value="mRNA"/>
</dbReference>
<dbReference type="EMBL" id="CU329670">
    <property type="protein sequence ID" value="CAB11187.1"/>
    <property type="molecule type" value="Genomic_DNA"/>
</dbReference>
<dbReference type="PIR" id="T37536">
    <property type="entry name" value="T37536"/>
</dbReference>
<dbReference type="RefSeq" id="NP_594933.1">
    <property type="nucleotide sequence ID" value="NM_001020364.2"/>
</dbReference>
<dbReference type="BioGRID" id="278013">
    <property type="interactions" value="121"/>
</dbReference>
<dbReference type="FunCoup" id="O13688">
    <property type="interactions" value="7"/>
</dbReference>
<dbReference type="IntAct" id="O13688">
    <property type="interactions" value="7"/>
</dbReference>
<dbReference type="MINT" id="O13688"/>
<dbReference type="STRING" id="284812.O13688"/>
<dbReference type="iPTMnet" id="O13688"/>
<dbReference type="PaxDb" id="4896-SPAC11E3.08c.1"/>
<dbReference type="EnsemblFungi" id="SPAC11E3.08c.1">
    <property type="protein sequence ID" value="SPAC11E3.08c.1:pep"/>
    <property type="gene ID" value="SPAC11E3.08c"/>
</dbReference>
<dbReference type="GeneID" id="2541512"/>
<dbReference type="KEGG" id="spo:2541512"/>
<dbReference type="PomBase" id="SPAC11E3.08c">
    <property type="gene designation" value="nse6"/>
</dbReference>
<dbReference type="VEuPathDB" id="FungiDB:SPAC11E3.08c"/>
<dbReference type="HOGENOM" id="CLU_521904_0_0_1"/>
<dbReference type="InParanoid" id="O13688"/>
<dbReference type="OMA" id="CEVKDYI"/>
<dbReference type="PRO" id="PR:O13688"/>
<dbReference type="Proteomes" id="UP000002485">
    <property type="component" value="Chromosome I"/>
</dbReference>
<dbReference type="GO" id="GO:0005634">
    <property type="term" value="C:nucleus"/>
    <property type="evidence" value="ECO:0007005"/>
    <property type="project" value="PomBase"/>
</dbReference>
<dbReference type="GO" id="GO:0030915">
    <property type="term" value="C:Smc5-Smc6 complex"/>
    <property type="evidence" value="ECO:0000314"/>
    <property type="project" value="PomBase"/>
</dbReference>
<dbReference type="GO" id="GO:0140463">
    <property type="term" value="F:chromatin-protein adaptor activity"/>
    <property type="evidence" value="ECO:0000269"/>
    <property type="project" value="PomBase"/>
</dbReference>
<dbReference type="GO" id="GO:0006974">
    <property type="term" value="P:DNA damage response"/>
    <property type="evidence" value="ECO:0000315"/>
    <property type="project" value="PomBase"/>
</dbReference>
<dbReference type="GO" id="GO:0006302">
    <property type="term" value="P:double-strand break repair"/>
    <property type="evidence" value="ECO:0000269"/>
    <property type="project" value="PomBase"/>
</dbReference>
<dbReference type="GO" id="GO:0000724">
    <property type="term" value="P:double-strand break repair via homologous recombination"/>
    <property type="evidence" value="ECO:0000305"/>
    <property type="project" value="PomBase"/>
</dbReference>
<dbReference type="InterPro" id="IPR014803">
    <property type="entry name" value="DNA_repair_Nse5/Nse6"/>
</dbReference>
<dbReference type="Pfam" id="PF08691">
    <property type="entry name" value="Nse5"/>
    <property type="match status" value="1"/>
</dbReference>
<proteinExistence type="evidence at protein level"/>
<reference key="1">
    <citation type="submission" date="1998-01" db="EMBL/GenBank/DDBJ databases">
        <title>A marker for cell middles in fission yeast: evidence for a loss of apical identity in a polarity mutant.</title>
        <authorList>
            <person name="Sawin K.E."/>
            <person name="Hajibagheri M."/>
            <person name="Nurse P."/>
        </authorList>
    </citation>
    <scope>NUCLEOTIDE SEQUENCE [MRNA]</scope>
</reference>
<reference key="2">
    <citation type="journal article" date="2002" name="Nature">
        <title>The genome sequence of Schizosaccharomyces pombe.</title>
        <authorList>
            <person name="Wood V."/>
            <person name="Gwilliam R."/>
            <person name="Rajandream M.A."/>
            <person name="Lyne M.H."/>
            <person name="Lyne R."/>
            <person name="Stewart A."/>
            <person name="Sgouros J.G."/>
            <person name="Peat N."/>
            <person name="Hayles J."/>
            <person name="Baker S.G."/>
            <person name="Basham D."/>
            <person name="Bowman S."/>
            <person name="Brooks K."/>
            <person name="Brown D."/>
            <person name="Brown S."/>
            <person name="Chillingworth T."/>
            <person name="Churcher C.M."/>
            <person name="Collins M."/>
            <person name="Connor R."/>
            <person name="Cronin A."/>
            <person name="Davis P."/>
            <person name="Feltwell T."/>
            <person name="Fraser A."/>
            <person name="Gentles S."/>
            <person name="Goble A."/>
            <person name="Hamlin N."/>
            <person name="Harris D.E."/>
            <person name="Hidalgo J."/>
            <person name="Hodgson G."/>
            <person name="Holroyd S."/>
            <person name="Hornsby T."/>
            <person name="Howarth S."/>
            <person name="Huckle E.J."/>
            <person name="Hunt S."/>
            <person name="Jagels K."/>
            <person name="James K.D."/>
            <person name="Jones L."/>
            <person name="Jones M."/>
            <person name="Leather S."/>
            <person name="McDonald S."/>
            <person name="McLean J."/>
            <person name="Mooney P."/>
            <person name="Moule S."/>
            <person name="Mungall K.L."/>
            <person name="Murphy L.D."/>
            <person name="Niblett D."/>
            <person name="Odell C."/>
            <person name="Oliver K."/>
            <person name="O'Neil S."/>
            <person name="Pearson D."/>
            <person name="Quail M.A."/>
            <person name="Rabbinowitsch E."/>
            <person name="Rutherford K.M."/>
            <person name="Rutter S."/>
            <person name="Saunders D."/>
            <person name="Seeger K."/>
            <person name="Sharp S."/>
            <person name="Skelton J."/>
            <person name="Simmonds M.N."/>
            <person name="Squares R."/>
            <person name="Squares S."/>
            <person name="Stevens K."/>
            <person name="Taylor K."/>
            <person name="Taylor R.G."/>
            <person name="Tivey A."/>
            <person name="Walsh S.V."/>
            <person name="Warren T."/>
            <person name="Whitehead S."/>
            <person name="Woodward J.R."/>
            <person name="Volckaert G."/>
            <person name="Aert R."/>
            <person name="Robben J."/>
            <person name="Grymonprez B."/>
            <person name="Weltjens I."/>
            <person name="Vanstreels E."/>
            <person name="Rieger M."/>
            <person name="Schaefer M."/>
            <person name="Mueller-Auer S."/>
            <person name="Gabel C."/>
            <person name="Fuchs M."/>
            <person name="Duesterhoeft A."/>
            <person name="Fritzc C."/>
            <person name="Holzer E."/>
            <person name="Moestl D."/>
            <person name="Hilbert H."/>
            <person name="Borzym K."/>
            <person name="Langer I."/>
            <person name="Beck A."/>
            <person name="Lehrach H."/>
            <person name="Reinhardt R."/>
            <person name="Pohl T.M."/>
            <person name="Eger P."/>
            <person name="Zimmermann W."/>
            <person name="Wedler H."/>
            <person name="Wambutt R."/>
            <person name="Purnelle B."/>
            <person name="Goffeau A."/>
            <person name="Cadieu E."/>
            <person name="Dreano S."/>
            <person name="Gloux S."/>
            <person name="Lelaure V."/>
            <person name="Mottier S."/>
            <person name="Galibert F."/>
            <person name="Aves S.J."/>
            <person name="Xiang Z."/>
            <person name="Hunt C."/>
            <person name="Moore K."/>
            <person name="Hurst S.M."/>
            <person name="Lucas M."/>
            <person name="Rochet M."/>
            <person name="Gaillardin C."/>
            <person name="Tallada V.A."/>
            <person name="Garzon A."/>
            <person name="Thode G."/>
            <person name="Daga R.R."/>
            <person name="Cruzado L."/>
            <person name="Jimenez J."/>
            <person name="Sanchez M."/>
            <person name="del Rey F."/>
            <person name="Benito J."/>
            <person name="Dominguez A."/>
            <person name="Revuelta J.L."/>
            <person name="Moreno S."/>
            <person name="Armstrong J."/>
            <person name="Forsburg S.L."/>
            <person name="Cerutti L."/>
            <person name="Lowe T."/>
            <person name="McCombie W.R."/>
            <person name="Paulsen I."/>
            <person name="Potashkin J."/>
            <person name="Shpakovski G.V."/>
            <person name="Ussery D."/>
            <person name="Barrell B.G."/>
            <person name="Nurse P."/>
        </authorList>
    </citation>
    <scope>NUCLEOTIDE SEQUENCE [LARGE SCALE GENOMIC DNA]</scope>
    <source>
        <strain>972 / ATCC 24843</strain>
    </source>
</reference>
<reference key="3">
    <citation type="journal article" date="2006" name="Mol. Cell. Biol.">
        <title>The Nse5-Nse6 dimer mediates DNA repair roles of the Smc5-Smc6 complex.</title>
        <authorList>
            <person name="Pebernard S."/>
            <person name="Wohlschlegel J."/>
            <person name="McDonald W.H."/>
            <person name="Yates J.R. III"/>
            <person name="Boddy M.N."/>
        </authorList>
    </citation>
    <scope>PARTIAL PROTEIN SEQUENCE</scope>
    <scope>FUNCTION</scope>
    <scope>IDENTIFICATION IN THE SMC5/SMC6 COMPLEX</scope>
    <scope>INTERACTION WITH NSE5</scope>
    <scope>SUBCELLULAR LOCATION</scope>
    <scope>IDENTIFICATION BY MASS SPECTROMETRY</scope>
</reference>
<reference key="4">
    <citation type="journal article" date="2006" name="Nat. Biotechnol.">
        <title>ORFeome cloning and global analysis of protein localization in the fission yeast Schizosaccharomyces pombe.</title>
        <authorList>
            <person name="Matsuyama A."/>
            <person name="Arai R."/>
            <person name="Yashiroda Y."/>
            <person name="Shirai A."/>
            <person name="Kamata A."/>
            <person name="Sekido S."/>
            <person name="Kobayashi Y."/>
            <person name="Hashimoto A."/>
            <person name="Hamamoto M."/>
            <person name="Hiraoka Y."/>
            <person name="Horinouchi S."/>
            <person name="Yoshida M."/>
        </authorList>
    </citation>
    <scope>SUBCELLULAR LOCATION [LARGE SCALE ANALYSIS]</scope>
</reference>
<keyword id="KW-0158">Chromosome</keyword>
<keyword id="KW-0903">Direct protein sequencing</keyword>
<keyword id="KW-0227">DNA damage</keyword>
<keyword id="KW-0233">DNA recombination</keyword>
<keyword id="KW-0234">DNA repair</keyword>
<keyword id="KW-0539">Nucleus</keyword>
<keyword id="KW-1185">Reference proteome</keyword>
<feature type="chain" id="PRO_0000079254" description="Non-structural maintenance of chromosome element 6">
    <location>
        <begin position="1"/>
        <end position="522"/>
    </location>
</feature>
<feature type="region of interest" description="Disordered" evidence="1">
    <location>
        <begin position="482"/>
        <end position="522"/>
    </location>
</feature>
<feature type="compositionally biased region" description="Basic and acidic residues" evidence="1">
    <location>
        <begin position="482"/>
        <end position="492"/>
    </location>
</feature>
<feature type="compositionally biased region" description="Basic residues" evidence="1">
    <location>
        <begin position="504"/>
        <end position="522"/>
    </location>
</feature>
<comment type="function">
    <text evidence="2">Acts in a DNA repair pathway for removal of UV-induced DNA damage that is distinct from classical nucleotide excision repair and in repair of ionizing radiation damage. Functions in homologous recombination repair of DNA double strand breaks and in recovery of stalled replication forks. May prevent formation of excessive Holliday junctions or assist in their resolution.</text>
</comment>
<comment type="subunit">
    <text evidence="2">Component of the smc5/smc6 complex which consists of two subcomplexes, smc5-smc6-nse2 and nse1-nse2-nse4. Interacts with nse5.</text>
</comment>
<comment type="interaction">
    <interactant intactId="EBI-1150368">
        <id>O13688</id>
    </interactant>
    <interactant intactId="EBI-605440">
        <id>Q53EK2</id>
        <label>nse1</label>
    </interactant>
    <organismsDiffer>false</organismsDiffer>
    <experiments>2</experiments>
</comment>
<comment type="interaction">
    <interactant intactId="EBI-1150368">
        <id>O13688</id>
    </interactant>
    <interactant intactId="EBI-605449">
        <id>Q4PIR3</id>
        <label>nse2</label>
    </interactant>
    <organismsDiffer>false</organismsDiffer>
    <experiments>2</experiments>
</comment>
<comment type="interaction">
    <interactant intactId="EBI-1150368">
        <id>O13688</id>
    </interactant>
    <interactant intactId="EBI-1150352">
        <id>O94668</id>
        <label>nse5</label>
    </interactant>
    <organismsDiffer>false</organismsDiffer>
    <experiments>7</experiments>
</comment>
<comment type="interaction">
    <interactant intactId="EBI-1150368">
        <id>O13688</id>
    </interactant>
    <interactant intactId="EBI-603756">
        <id>O13710</id>
        <label>smc5</label>
    </interactant>
    <organismsDiffer>false</organismsDiffer>
    <experiments>5</experiments>
</comment>
<comment type="interaction">
    <interactant intactId="EBI-1150368">
        <id>O13688</id>
    </interactant>
    <interactant intactId="EBI-603745">
        <id>P53692</id>
        <label>smc6</label>
    </interactant>
    <organismsDiffer>false</organismsDiffer>
    <experiments>4</experiments>
</comment>
<comment type="subcellular location">
    <subcellularLocation>
        <location evidence="2 3">Nucleus</location>
    </subcellularLocation>
    <subcellularLocation>
        <location evidence="2">Chromosome</location>
    </subcellularLocation>
</comment>
<name>NSE6_SCHPO</name>
<accession>O13688</accession>